<protein>
    <recommendedName>
        <fullName evidence="1">Multidrug resistance protein MdtG</fullName>
    </recommendedName>
</protein>
<gene>
    <name evidence="1" type="primary">mdtG</name>
    <name type="ordered locus">SPA1697</name>
</gene>
<organism>
    <name type="scientific">Salmonella paratyphi A (strain ATCC 9150 / SARB42)</name>
    <dbReference type="NCBI Taxonomy" id="295319"/>
    <lineage>
        <taxon>Bacteria</taxon>
        <taxon>Pseudomonadati</taxon>
        <taxon>Pseudomonadota</taxon>
        <taxon>Gammaproteobacteria</taxon>
        <taxon>Enterobacterales</taxon>
        <taxon>Enterobacteriaceae</taxon>
        <taxon>Salmonella</taxon>
    </lineage>
</organism>
<feature type="chain" id="PRO_0000173338" description="Multidrug resistance protein MdtG">
    <location>
        <begin position="1"/>
        <end position="404"/>
    </location>
</feature>
<feature type="transmembrane region" description="Helical" evidence="1">
    <location>
        <begin position="19"/>
        <end position="39"/>
    </location>
</feature>
<feature type="transmembrane region" description="Helical" evidence="1">
    <location>
        <begin position="56"/>
        <end position="76"/>
    </location>
</feature>
<feature type="transmembrane region" description="Helical" evidence="1">
    <location>
        <begin position="90"/>
        <end position="110"/>
    </location>
</feature>
<feature type="transmembrane region" description="Helical" evidence="1">
    <location>
        <begin position="113"/>
        <end position="133"/>
    </location>
</feature>
<feature type="transmembrane region" description="Helical" evidence="1">
    <location>
        <begin position="144"/>
        <end position="164"/>
    </location>
</feature>
<feature type="transmembrane region" description="Helical" evidence="1">
    <location>
        <begin position="171"/>
        <end position="191"/>
    </location>
</feature>
<feature type="transmembrane region" description="Helical" evidence="1">
    <location>
        <begin position="222"/>
        <end position="242"/>
    </location>
</feature>
<feature type="transmembrane region" description="Helical" evidence="1">
    <location>
        <begin position="254"/>
        <end position="274"/>
    </location>
</feature>
<feature type="transmembrane region" description="Helical" evidence="1">
    <location>
        <begin position="288"/>
        <end position="308"/>
    </location>
</feature>
<feature type="transmembrane region" description="Helical" evidence="1">
    <location>
        <begin position="317"/>
        <end position="337"/>
    </location>
</feature>
<feature type="transmembrane region" description="Helical" evidence="1">
    <location>
        <begin position="376"/>
        <end position="396"/>
    </location>
</feature>
<reference key="1">
    <citation type="journal article" date="2004" name="Nat. Genet.">
        <title>Comparison of genome degradation in Paratyphi A and Typhi, human-restricted serovars of Salmonella enterica that cause typhoid.</title>
        <authorList>
            <person name="McClelland M."/>
            <person name="Sanderson K.E."/>
            <person name="Clifton S.W."/>
            <person name="Latreille P."/>
            <person name="Porwollik S."/>
            <person name="Sabo A."/>
            <person name="Meyer R."/>
            <person name="Bieri T."/>
            <person name="Ozersky P."/>
            <person name="McLellan M."/>
            <person name="Harkins C.R."/>
            <person name="Wang C."/>
            <person name="Nguyen C."/>
            <person name="Berghoff A."/>
            <person name="Elliott G."/>
            <person name="Kohlberg S."/>
            <person name="Strong C."/>
            <person name="Du F."/>
            <person name="Carter J."/>
            <person name="Kremizki C."/>
            <person name="Layman D."/>
            <person name="Leonard S."/>
            <person name="Sun H."/>
            <person name="Fulton L."/>
            <person name="Nash W."/>
            <person name="Miner T."/>
            <person name="Minx P."/>
            <person name="Delehaunty K."/>
            <person name="Fronick C."/>
            <person name="Magrini V."/>
            <person name="Nhan M."/>
            <person name="Warren W."/>
            <person name="Florea L."/>
            <person name="Spieth J."/>
            <person name="Wilson R.K."/>
        </authorList>
    </citation>
    <scope>NUCLEOTIDE SEQUENCE [LARGE SCALE GENOMIC DNA]</scope>
    <source>
        <strain>ATCC 9150 / SARB42</strain>
    </source>
</reference>
<proteinExistence type="inferred from homology"/>
<evidence type="ECO:0000255" key="1">
    <source>
        <dbReference type="HAMAP-Rule" id="MF_01528"/>
    </source>
</evidence>
<dbReference type="EMBL" id="CP000026">
    <property type="protein sequence ID" value="AAV77621.1"/>
    <property type="molecule type" value="Genomic_DNA"/>
</dbReference>
<dbReference type="RefSeq" id="WP_000075043.1">
    <property type="nucleotide sequence ID" value="NC_006511.1"/>
</dbReference>
<dbReference type="SMR" id="Q5PGY0"/>
<dbReference type="KEGG" id="spt:SPA1697"/>
<dbReference type="HOGENOM" id="CLU_001265_57_3_6"/>
<dbReference type="Proteomes" id="UP000008185">
    <property type="component" value="Chromosome"/>
</dbReference>
<dbReference type="GO" id="GO:0005886">
    <property type="term" value="C:plasma membrane"/>
    <property type="evidence" value="ECO:0007669"/>
    <property type="project" value="UniProtKB-SubCell"/>
</dbReference>
<dbReference type="GO" id="GO:0022857">
    <property type="term" value="F:transmembrane transporter activity"/>
    <property type="evidence" value="ECO:0007669"/>
    <property type="project" value="UniProtKB-UniRule"/>
</dbReference>
<dbReference type="CDD" id="cd17391">
    <property type="entry name" value="MFS_MdtG_MDR_like"/>
    <property type="match status" value="1"/>
</dbReference>
<dbReference type="FunFam" id="1.20.1250.20:FF:000020">
    <property type="entry name" value="Multidrug resistance protein MdtG"/>
    <property type="match status" value="1"/>
</dbReference>
<dbReference type="FunFam" id="1.20.1250.20:FF:000022">
    <property type="entry name" value="Multidrug resistance protein MdtG"/>
    <property type="match status" value="1"/>
</dbReference>
<dbReference type="Gene3D" id="1.20.1250.20">
    <property type="entry name" value="MFS general substrate transporter like domains"/>
    <property type="match status" value="2"/>
</dbReference>
<dbReference type="HAMAP" id="MF_01528">
    <property type="entry name" value="MFS_MdtG"/>
    <property type="match status" value="1"/>
</dbReference>
<dbReference type="InterPro" id="IPR011701">
    <property type="entry name" value="MFS"/>
</dbReference>
<dbReference type="InterPro" id="IPR020846">
    <property type="entry name" value="MFS_dom"/>
</dbReference>
<dbReference type="InterPro" id="IPR050497">
    <property type="entry name" value="MFS_MdtG_subfamily"/>
</dbReference>
<dbReference type="InterPro" id="IPR005828">
    <property type="entry name" value="MFS_sugar_transport-like"/>
</dbReference>
<dbReference type="InterPro" id="IPR036259">
    <property type="entry name" value="MFS_trans_sf"/>
</dbReference>
<dbReference type="InterPro" id="IPR023692">
    <property type="entry name" value="Mutidrug-R_MdtG"/>
</dbReference>
<dbReference type="InterPro" id="IPR001958">
    <property type="entry name" value="Tet-R_TetA/multi-R_MdtG-like"/>
</dbReference>
<dbReference type="NCBIfam" id="NF007372">
    <property type="entry name" value="PRK09874.1"/>
    <property type="match status" value="1"/>
</dbReference>
<dbReference type="PANTHER" id="PTHR43414">
    <property type="entry name" value="MULTIDRUG RESISTANCE PROTEIN MDTG"/>
    <property type="match status" value="1"/>
</dbReference>
<dbReference type="PANTHER" id="PTHR43414:SF6">
    <property type="entry name" value="MULTIDRUG RESISTANCE PROTEIN MDTG"/>
    <property type="match status" value="1"/>
</dbReference>
<dbReference type="Pfam" id="PF07690">
    <property type="entry name" value="MFS_1"/>
    <property type="match status" value="1"/>
</dbReference>
<dbReference type="Pfam" id="PF00083">
    <property type="entry name" value="Sugar_tr"/>
    <property type="match status" value="1"/>
</dbReference>
<dbReference type="PRINTS" id="PR01035">
    <property type="entry name" value="TCRTETA"/>
</dbReference>
<dbReference type="SUPFAM" id="SSF103473">
    <property type="entry name" value="MFS general substrate transporter"/>
    <property type="match status" value="1"/>
</dbReference>
<dbReference type="PROSITE" id="PS50850">
    <property type="entry name" value="MFS"/>
    <property type="match status" value="1"/>
</dbReference>
<sequence length="404" mass="43568">MSPSDVPINWKRNLTVTWLGCFLTGAAFSLVMPFLPLYVEQLGVTGHSALNMWSGLVFSITFLFSAIASPFWGGLADRKGRKIMLLRSALGMAIVMLLMGMAQNIWQFLILRALLGLLGGFIPNANALIATQAPRHKSGWALGTLSTGGVSGALLGPLAGGLLADHYGLRPVFFITASVLFICFLLTFFFIRENFLPVSKKEMLHVREVVASLKNPRLVLSLFVTTLIIQVATGSIAPILTLYVRELAGNVSNIAFISGMIASVPGVAALLSAPRLGKLGDRIGPEKILIVALIISVLLLIPMSFVQTPWQLALLRFLLGAADGALLPAVQTLLVYNSTNQIAGRIFSYNQSFRDIGNVTGPLMGAAISASYGFRAVFCVTAGVVLFNAIYSWNSLRRRRLAIE</sequence>
<comment type="subcellular location">
    <subcellularLocation>
        <location evidence="1">Cell inner membrane</location>
        <topology evidence="1">Multi-pass membrane protein</topology>
    </subcellularLocation>
</comment>
<comment type="similarity">
    <text evidence="1">Belongs to the major facilitator superfamily. DHA1 family. MdtG (TC 2.A.1.2.20) subfamily.</text>
</comment>
<keyword id="KW-0997">Cell inner membrane</keyword>
<keyword id="KW-1003">Cell membrane</keyword>
<keyword id="KW-0472">Membrane</keyword>
<keyword id="KW-0812">Transmembrane</keyword>
<keyword id="KW-1133">Transmembrane helix</keyword>
<keyword id="KW-0813">Transport</keyword>
<accession>Q5PGY0</accession>
<name>MDTG_SALPA</name>